<evidence type="ECO:0000250" key="1">
    <source>
        <dbReference type="UniProtKB" id="W5U2K2"/>
    </source>
</evidence>
<evidence type="ECO:0000255" key="2"/>
<evidence type="ECO:0000255" key="3">
    <source>
        <dbReference type="PROSITE-ProRule" id="PRU00914"/>
    </source>
</evidence>
<evidence type="ECO:0000269" key="4">
    <source>
    </source>
</evidence>
<evidence type="ECO:0000303" key="5">
    <source>
    </source>
</evidence>
<evidence type="ECO:0000305" key="6"/>
<reference key="1">
    <citation type="journal article" date="2022" name="Plant Cell Physiol.">
        <title>Tonoplast and peroxisome targeting of gamma-tocopherol N-methyltransferase homologs involved in the synthesis of monoterpene indole alkaloids.</title>
        <authorList>
            <person name="Koudounas K."/>
            <person name="Guirimand G."/>
            <person name="Hoyos L.F.R."/>
            <person name="Carqueijeiro I."/>
            <person name="Cruz P.L."/>
            <person name="Stander E."/>
            <person name="Kulagina N."/>
            <person name="Perrin J."/>
            <person name="Oudin A."/>
            <person name="Besseau S."/>
            <person name="Lanoue A."/>
            <person name="Atehortua L."/>
            <person name="St-Pierre B."/>
            <person name="Giglioli-Guivarc'h N."/>
            <person name="Papon N."/>
            <person name="O'Connor S.E."/>
            <person name="Courdavault V."/>
        </authorList>
    </citation>
    <scope>NUCLEOTIDE SEQUENCE [MRNA]</scope>
    <scope>FUNCTION</scope>
    <scope>CATALYTIC ACTIVITY</scope>
    <scope>PATHWAY</scope>
    <scope>SUBCELLULAR LOCATION</scope>
    <scope>GENE FAMILY</scope>
</reference>
<keyword id="KW-0017">Alkaloid metabolism</keyword>
<keyword id="KW-0472">Membrane</keyword>
<keyword id="KW-0489">Methyltransferase</keyword>
<keyword id="KW-0949">S-adenosyl-L-methionine</keyword>
<keyword id="KW-0808">Transferase</keyword>
<keyword id="KW-0926">Vacuole</keyword>
<feature type="chain" id="PRO_0000458248" description="Picrinine-N-methytransferase TMT2">
    <location>
        <begin position="1"/>
        <end position="294"/>
    </location>
</feature>
<feature type="region of interest" description="SAM motif I" evidence="3">
    <location>
        <begin position="75"/>
        <end position="84"/>
    </location>
</feature>
<feature type="region of interest" description="SAM motif II" evidence="3">
    <location>
        <begin position="138"/>
        <end position="146"/>
    </location>
</feature>
<feature type="region of interest" description="SAM motif III" evidence="3">
    <location>
        <begin position="165"/>
        <end position="174"/>
    </location>
</feature>
<feature type="short sequence motif" description="Vacuolar targeting signal" evidence="2">
    <location>
        <begin position="137"/>
        <end position="143"/>
    </location>
</feature>
<organism>
    <name type="scientific">Catharanthus roseus</name>
    <name type="common">Madagascar periwinkle</name>
    <name type="synonym">Vinca rosea</name>
    <dbReference type="NCBI Taxonomy" id="4058"/>
    <lineage>
        <taxon>Eukaryota</taxon>
        <taxon>Viridiplantae</taxon>
        <taxon>Streptophyta</taxon>
        <taxon>Embryophyta</taxon>
        <taxon>Tracheophyta</taxon>
        <taxon>Spermatophyta</taxon>
        <taxon>Magnoliopsida</taxon>
        <taxon>eudicotyledons</taxon>
        <taxon>Gunneridae</taxon>
        <taxon>Pentapetalae</taxon>
        <taxon>asterids</taxon>
        <taxon>lamiids</taxon>
        <taxon>Gentianales</taxon>
        <taxon>Apocynaceae</taxon>
        <taxon>Rauvolfioideae</taxon>
        <taxon>Vinceae</taxon>
        <taxon>Catharanthinae</taxon>
        <taxon>Catharanthus</taxon>
    </lineage>
</organism>
<gene>
    <name evidence="5" type="primary">TMT2</name>
</gene>
<dbReference type="EC" id="2.1.1.-" evidence="4"/>
<dbReference type="EMBL" id="MZ367708">
    <property type="protein sequence ID" value="URY10632.1"/>
    <property type="molecule type" value="mRNA"/>
</dbReference>
<dbReference type="SMR" id="A0A8X8M4T9"/>
<dbReference type="OrthoDB" id="8300214at2759"/>
<dbReference type="UniPathway" id="UPA00365"/>
<dbReference type="GO" id="GO:0009705">
    <property type="term" value="C:plant-type vacuole membrane"/>
    <property type="evidence" value="ECO:0000314"/>
    <property type="project" value="UniProtKB"/>
</dbReference>
<dbReference type="GO" id="GO:0008757">
    <property type="term" value="F:S-adenosylmethionine-dependent methyltransferase activity"/>
    <property type="evidence" value="ECO:0007669"/>
    <property type="project" value="InterPro"/>
</dbReference>
<dbReference type="GO" id="GO:0009820">
    <property type="term" value="P:alkaloid metabolic process"/>
    <property type="evidence" value="ECO:0007669"/>
    <property type="project" value="UniProtKB-KW"/>
</dbReference>
<dbReference type="GO" id="GO:0032259">
    <property type="term" value="P:methylation"/>
    <property type="evidence" value="ECO:0007669"/>
    <property type="project" value="UniProtKB-KW"/>
</dbReference>
<dbReference type="CDD" id="cd02440">
    <property type="entry name" value="AdoMet_MTases"/>
    <property type="match status" value="1"/>
</dbReference>
<dbReference type="Gene3D" id="3.40.50.150">
    <property type="entry name" value="Vaccinia Virus protein VP39"/>
    <property type="match status" value="1"/>
</dbReference>
<dbReference type="InterPro" id="IPR050447">
    <property type="entry name" value="Erg6_SMT_methyltransf"/>
</dbReference>
<dbReference type="InterPro" id="IPR013216">
    <property type="entry name" value="Methyltransf_11"/>
</dbReference>
<dbReference type="InterPro" id="IPR029063">
    <property type="entry name" value="SAM-dependent_MTases_sf"/>
</dbReference>
<dbReference type="PANTHER" id="PTHR44068:SF11">
    <property type="entry name" value="GERANYL DIPHOSPHATE 2-C-METHYLTRANSFERASE"/>
    <property type="match status" value="1"/>
</dbReference>
<dbReference type="PANTHER" id="PTHR44068">
    <property type="entry name" value="ZGC:194242"/>
    <property type="match status" value="1"/>
</dbReference>
<dbReference type="Pfam" id="PF08241">
    <property type="entry name" value="Methyltransf_11"/>
    <property type="match status" value="1"/>
</dbReference>
<dbReference type="SUPFAM" id="SSF53335">
    <property type="entry name" value="S-adenosyl-L-methionine-dependent methyltransferases"/>
    <property type="match status" value="1"/>
</dbReference>
<dbReference type="PROSITE" id="PS51581">
    <property type="entry name" value="SAM_GTMT"/>
    <property type="match status" value="1"/>
</dbReference>
<proteinExistence type="evidence at protein level"/>
<protein>
    <recommendedName>
        <fullName evidence="6">Picrinine-N-methytransferase TMT2</fullName>
        <shortName evidence="6">CrPiNMT2</shortName>
        <ecNumber evidence="4">2.1.1.-</ecNumber>
    </recommendedName>
    <alternativeName>
        <fullName evidence="5">Gamma-tocopherol-like methyltransferase 2</fullName>
        <shortName evidence="5">CrTMT2</shortName>
    </alternativeName>
</protein>
<sequence length="294" mass="32471">MAAVVEKQEAVAEFYDNSTGAWEELFGEHLHDGYYEPGTTATIPAHRAAVVRMIDEALRFAGVSTDDPAKKPRNLLDVGCGLGGTCLYLAKKYDIKCTGITISPEQVKCAEDLAAAQGLENKVSFDVGDALDMPYQDGEFDVVFTLQCIDHVQDKEKFIREMVRVGSPGAAIVVITYTHRDLSPTEQSLKPHEIKTLKKICDNIVLSSISSTHDYVNWMTSLSLKDIKTADWTQNIIPFYPLLFKVSFSMKGFISLLMKGGWSAIKVVLAVKMMSKAIDDGLLYYTAVSGRKPN</sequence>
<accession>A0A8X8M4T9</accession>
<name>TMT2_CATRO</name>
<comment type="function">
    <text evidence="4">S-adenosyl-L-methionine-dependent N-methyltransferase involved in the biosynthesis of biologically active monoterpenoid indole alkaloids (MIAs) natural products including vindoline (PubMed:35166361). Catalyzes the conversion of picrinine to N-methylpicrinine (ervincine) (PubMed:35166361).</text>
</comment>
<comment type="catalytic activity">
    <reaction evidence="4">
        <text>picrinine + S-adenosyl-L-methionine = ervincine + S-adenosyl-L-homocysteine + H(+)</text>
        <dbReference type="Rhea" id="RHEA:76143"/>
        <dbReference type="ChEBI" id="CHEBI:15378"/>
        <dbReference type="ChEBI" id="CHEBI:57856"/>
        <dbReference type="ChEBI" id="CHEBI:59789"/>
        <dbReference type="ChEBI" id="CHEBI:70505"/>
        <dbReference type="ChEBI" id="CHEBI:194555"/>
    </reaction>
    <physiologicalReaction direction="left-to-right" evidence="4">
        <dbReference type="Rhea" id="RHEA:76144"/>
    </physiologicalReaction>
</comment>
<comment type="pathway">
    <text evidence="4">Alkaloid biosynthesis; vindoline biosynthesis.</text>
</comment>
<comment type="subunit">
    <text evidence="1">Homodimer.</text>
</comment>
<comment type="subcellular location">
    <subcellularLocation>
        <location evidence="4">Vacuole membrane</location>
    </subcellularLocation>
</comment>
<comment type="similarity">
    <text evidence="3">Belongs to the class I-like SAM-binding methyltransferase superfamily. gTMT family.</text>
</comment>